<keyword id="KW-0067">ATP-binding</keyword>
<keyword id="KW-0347">Helicase</keyword>
<keyword id="KW-0378">Hydrolase</keyword>
<keyword id="KW-0547">Nucleotide-binding</keyword>
<keyword id="KW-0694">RNA-binding</keyword>
<keyword id="KW-0804">Transcription</keyword>
<keyword id="KW-0805">Transcription regulation</keyword>
<keyword id="KW-0806">Transcription termination</keyword>
<sequence>MHVSELQTLHISKLLELAEEHGIENANRFRKQDLVFAIVRQMMKKGEGFTCSGTLEILPDGFGFLRSADTSYLAGPDDIYVSPTQIRRFNLHTGDTIEGSVRVPKDNERYFALVRLDSINGDHPEVCRHKILFENLTPLFPTEQLKLERDLKSEENLTGRAIDLISPIGKGQRALLVAPPKIGKTVMLENIAHEVTANYPEVELIVLLIDERPEEVTEMSRSVRGEVVSSTFDEPAQRHVQVAEMVLEKAKRMVEHKKDVVILLDSITRLARAYNTVVPASGKILTGGVDANALHRPKRFFGAARNVEEGGSLTIIATALVETGSRMDDVIYEEFKGTGNMELHLDRRIAEKRLFPAININKSGTRREELLVPNDQLQRMWLLRKFLHPMDEIEATEFLNGKIKASKNNDDFFELMRGK</sequence>
<name>RHO_NEIGO</name>
<protein>
    <recommendedName>
        <fullName evidence="1">Transcription termination factor Rho</fullName>
        <ecNumber evidence="1">3.6.4.-</ecNumber>
    </recommendedName>
    <alternativeName>
        <fullName evidence="1">ATP-dependent helicase Rho</fullName>
    </alternativeName>
</protein>
<accession>Q06447</accession>
<gene>
    <name evidence="1" type="primary">rho</name>
</gene>
<feature type="chain" id="PRO_0000188972" description="Transcription termination factor Rho">
    <location>
        <begin position="1"/>
        <end position="419"/>
    </location>
</feature>
<feature type="domain" description="Rho RNA-BD" evidence="2">
    <location>
        <begin position="48"/>
        <end position="123"/>
    </location>
</feature>
<feature type="binding site" evidence="1">
    <location>
        <begin position="169"/>
        <end position="174"/>
    </location>
    <ligand>
        <name>ATP</name>
        <dbReference type="ChEBI" id="CHEBI:30616"/>
    </ligand>
</feature>
<feature type="binding site" evidence="1">
    <location>
        <begin position="181"/>
        <end position="186"/>
    </location>
    <ligand>
        <name>ATP</name>
        <dbReference type="ChEBI" id="CHEBI:30616"/>
    </ligand>
</feature>
<feature type="binding site" evidence="1">
    <location>
        <position position="212"/>
    </location>
    <ligand>
        <name>ATP</name>
        <dbReference type="ChEBI" id="CHEBI:30616"/>
    </ligand>
</feature>
<organism>
    <name type="scientific">Neisseria gonorrhoeae</name>
    <dbReference type="NCBI Taxonomy" id="485"/>
    <lineage>
        <taxon>Bacteria</taxon>
        <taxon>Pseudomonadati</taxon>
        <taxon>Pseudomonadota</taxon>
        <taxon>Betaproteobacteria</taxon>
        <taxon>Neisseriales</taxon>
        <taxon>Neisseriaceae</taxon>
        <taxon>Neisseria</taxon>
    </lineage>
</organism>
<comment type="function">
    <text evidence="1">Facilitates transcription termination by a mechanism that involves Rho binding to the nascent RNA, activation of Rho's RNA-dependent ATPase activity, and release of the mRNA from the DNA template.</text>
</comment>
<comment type="subunit">
    <text evidence="1">Homohexamer. The homohexamer assembles into an open ring structure.</text>
</comment>
<comment type="similarity">
    <text evidence="1">Belongs to the Rho family.</text>
</comment>
<proteinExistence type="inferred from homology"/>
<reference key="1">
    <citation type="journal article" date="1993" name="J. Bacteriol.">
        <title>Characterization of the rho genes of Neisseria gonorrhoeae and Salmonella typhimurium.</title>
        <authorList>
            <person name="Miloso M."/>
            <person name="Limauro D."/>
            <person name="Alifano P."/>
            <person name="Rivellini F."/>
            <person name="Lavitola A."/>
            <person name="Gulletta E."/>
            <person name="Bruni C.B."/>
        </authorList>
    </citation>
    <scope>NUCLEOTIDE SEQUENCE [GENOMIC DNA]</scope>
</reference>
<evidence type="ECO:0000255" key="1">
    <source>
        <dbReference type="HAMAP-Rule" id="MF_01884"/>
    </source>
</evidence>
<evidence type="ECO:0000255" key="2">
    <source>
        <dbReference type="PROSITE-ProRule" id="PRU01203"/>
    </source>
</evidence>
<dbReference type="EC" id="3.6.4.-" evidence="1"/>
<dbReference type="EMBL" id="Z21790">
    <property type="protein sequence ID" value="CAA79853.1"/>
    <property type="molecule type" value="Genomic_DNA"/>
</dbReference>
<dbReference type="PIR" id="D49917">
    <property type="entry name" value="D49917"/>
</dbReference>
<dbReference type="SMR" id="Q06447"/>
<dbReference type="GO" id="GO:0005829">
    <property type="term" value="C:cytosol"/>
    <property type="evidence" value="ECO:0007669"/>
    <property type="project" value="UniProtKB-ARBA"/>
</dbReference>
<dbReference type="GO" id="GO:0005524">
    <property type="term" value="F:ATP binding"/>
    <property type="evidence" value="ECO:0007669"/>
    <property type="project" value="UniProtKB-UniRule"/>
</dbReference>
<dbReference type="GO" id="GO:0016887">
    <property type="term" value="F:ATP hydrolysis activity"/>
    <property type="evidence" value="ECO:0007669"/>
    <property type="project" value="InterPro"/>
</dbReference>
<dbReference type="GO" id="GO:0008186">
    <property type="term" value="F:ATP-dependent activity, acting on RNA"/>
    <property type="evidence" value="ECO:0007669"/>
    <property type="project" value="InterPro"/>
</dbReference>
<dbReference type="GO" id="GO:0004386">
    <property type="term" value="F:helicase activity"/>
    <property type="evidence" value="ECO:0007669"/>
    <property type="project" value="UniProtKB-UniRule"/>
</dbReference>
<dbReference type="GO" id="GO:0003723">
    <property type="term" value="F:RNA binding"/>
    <property type="evidence" value="ECO:0007669"/>
    <property type="project" value="UniProtKB-UniRule"/>
</dbReference>
<dbReference type="GO" id="GO:0006353">
    <property type="term" value="P:DNA-templated transcription termination"/>
    <property type="evidence" value="ECO:0007669"/>
    <property type="project" value="UniProtKB-UniRule"/>
</dbReference>
<dbReference type="CDD" id="cd04459">
    <property type="entry name" value="Rho_CSD"/>
    <property type="match status" value="1"/>
</dbReference>
<dbReference type="CDD" id="cd01128">
    <property type="entry name" value="rho_factor_C"/>
    <property type="match status" value="1"/>
</dbReference>
<dbReference type="FunFam" id="3.40.50.300:FF:000072">
    <property type="entry name" value="Transcription termination factor Rho"/>
    <property type="match status" value="1"/>
</dbReference>
<dbReference type="Gene3D" id="1.10.720.10">
    <property type="match status" value="1"/>
</dbReference>
<dbReference type="Gene3D" id="2.40.50.140">
    <property type="entry name" value="Nucleic acid-binding proteins"/>
    <property type="match status" value="1"/>
</dbReference>
<dbReference type="Gene3D" id="3.40.50.300">
    <property type="entry name" value="P-loop containing nucleotide triphosphate hydrolases"/>
    <property type="match status" value="1"/>
</dbReference>
<dbReference type="HAMAP" id="MF_01884">
    <property type="entry name" value="Rho"/>
    <property type="match status" value="1"/>
</dbReference>
<dbReference type="InterPro" id="IPR003593">
    <property type="entry name" value="AAA+_ATPase"/>
</dbReference>
<dbReference type="InterPro" id="IPR000194">
    <property type="entry name" value="ATPase_F1/V1/A1_a/bsu_nucl-bd"/>
</dbReference>
<dbReference type="InterPro" id="IPR011129">
    <property type="entry name" value="CSD"/>
</dbReference>
<dbReference type="InterPro" id="IPR012340">
    <property type="entry name" value="NA-bd_OB-fold"/>
</dbReference>
<dbReference type="InterPro" id="IPR027417">
    <property type="entry name" value="P-loop_NTPase"/>
</dbReference>
<dbReference type="InterPro" id="IPR011112">
    <property type="entry name" value="Rho-like_N"/>
</dbReference>
<dbReference type="InterPro" id="IPR041703">
    <property type="entry name" value="Rho_factor_ATP-bd"/>
</dbReference>
<dbReference type="InterPro" id="IPR036269">
    <property type="entry name" value="Rho_N_sf"/>
</dbReference>
<dbReference type="InterPro" id="IPR011113">
    <property type="entry name" value="Rho_RNA-bd"/>
</dbReference>
<dbReference type="InterPro" id="IPR004665">
    <property type="entry name" value="Term_rho"/>
</dbReference>
<dbReference type="NCBIfam" id="NF006886">
    <property type="entry name" value="PRK09376.1"/>
    <property type="match status" value="1"/>
</dbReference>
<dbReference type="NCBIfam" id="TIGR00767">
    <property type="entry name" value="rho"/>
    <property type="match status" value="1"/>
</dbReference>
<dbReference type="PANTHER" id="PTHR46425">
    <property type="entry name" value="TRANSCRIPTION TERMINATION FACTOR RHO"/>
    <property type="match status" value="1"/>
</dbReference>
<dbReference type="PANTHER" id="PTHR46425:SF1">
    <property type="entry name" value="TRANSCRIPTION TERMINATION FACTOR RHO"/>
    <property type="match status" value="1"/>
</dbReference>
<dbReference type="Pfam" id="PF00006">
    <property type="entry name" value="ATP-synt_ab"/>
    <property type="match status" value="1"/>
</dbReference>
<dbReference type="Pfam" id="PF07498">
    <property type="entry name" value="Rho_N"/>
    <property type="match status" value="1"/>
</dbReference>
<dbReference type="Pfam" id="PF07497">
    <property type="entry name" value="Rho_RNA_bind"/>
    <property type="match status" value="1"/>
</dbReference>
<dbReference type="SMART" id="SM00382">
    <property type="entry name" value="AAA"/>
    <property type="match status" value="1"/>
</dbReference>
<dbReference type="SMART" id="SM00357">
    <property type="entry name" value="CSP"/>
    <property type="match status" value="1"/>
</dbReference>
<dbReference type="SMART" id="SM00959">
    <property type="entry name" value="Rho_N"/>
    <property type="match status" value="1"/>
</dbReference>
<dbReference type="SUPFAM" id="SSF50249">
    <property type="entry name" value="Nucleic acid-binding proteins"/>
    <property type="match status" value="1"/>
</dbReference>
<dbReference type="SUPFAM" id="SSF52540">
    <property type="entry name" value="P-loop containing nucleoside triphosphate hydrolases"/>
    <property type="match status" value="1"/>
</dbReference>
<dbReference type="SUPFAM" id="SSF68912">
    <property type="entry name" value="Rho N-terminal domain-like"/>
    <property type="match status" value="1"/>
</dbReference>
<dbReference type="PROSITE" id="PS51856">
    <property type="entry name" value="RHO_RNA_BD"/>
    <property type="match status" value="1"/>
</dbReference>